<name>GL_EBVA8</name>
<evidence type="ECO:0000250" key="1">
    <source>
        <dbReference type="UniProtKB" id="P03212"/>
    </source>
</evidence>
<evidence type="ECO:0000255" key="2">
    <source>
        <dbReference type="HAMAP-Rule" id="MF_04034"/>
    </source>
</evidence>
<accession>Q1HVF6</accession>
<comment type="function">
    <text evidence="1 2">The heterodimer glycoprotein H-glycoprotein L is required for the fusion of viral and plasma membranes leading to virus entry into the host cell. Acts as a functional inhibitor of gH and maintains gH in an inhibited form. Upon binding to host integrins, gL dissociates from gH leading to activation of the viral fusion glycoproteins gB and gH. The heterodimer gH/gL targets also host EPHA2 to promote viral entry.</text>
</comment>
<comment type="subunit">
    <text evidence="2">Interacts with glycoprotein H (gH); this interaction is necessary for the correct processing and cell surface expression of gH. The heterodimer gH/gL seems to interact with gB trimers during fusion. The heterodimer gH/gL interacts with host EPHA2 to facilitate virus internalization and fusion.</text>
</comment>
<comment type="subcellular location">
    <subcellularLocation>
        <location evidence="2">Virion membrane</location>
        <topology evidence="2">Peripheral membrane protein</topology>
        <orientation evidence="2">Extracellular side</orientation>
    </subcellularLocation>
    <subcellularLocation>
        <location evidence="2">Host cell membrane</location>
        <topology evidence="2">Peripheral membrane protein</topology>
        <orientation evidence="2">Extracellular side</orientation>
    </subcellularLocation>
    <subcellularLocation>
        <location evidence="2">Host Golgi apparatus</location>
        <location evidence="2">Host trans-Golgi network</location>
    </subcellularLocation>
    <text evidence="2">gL associates with the extravirion surface through its binding to gH. During virion morphogenesis, this protein probably accumulates in the host trans-Golgi where secondary envelopment occurs.</text>
</comment>
<comment type="similarity">
    <text evidence="2">Belongs to the herpesviridae glycoprotein L family.</text>
</comment>
<sequence length="137" mass="15098">MRTVGVFLATCLVTIFVLPTWGNWAYPCCHVTQLRAQHLLALENISDIYLVSNQTCDGFSLASLNSPKNGSNQLVISRCANGLNVVSFFISILKRSSSALTGHLRELLTTLETLYGSFSVEDLFGANLNRYAWHRGG</sequence>
<reference key="1">
    <citation type="journal article" date="2006" name="Virology">
        <title>The genome of Epstein-Barr virus type 2 strain AG876.</title>
        <authorList>
            <person name="Dolan A."/>
            <person name="Addison C."/>
            <person name="Gatherer D."/>
            <person name="Davison A.J."/>
            <person name="McGeoch D.J."/>
        </authorList>
    </citation>
    <scope>NUCLEOTIDE SEQUENCE [LARGE SCALE GENOMIC DNA]</scope>
</reference>
<keyword id="KW-0002">3D-structure</keyword>
<keyword id="KW-1015">Disulfide bond</keyword>
<keyword id="KW-1169">Fusion of virus membrane with host cell membrane</keyword>
<keyword id="KW-1168">Fusion of virus membrane with host membrane</keyword>
<keyword id="KW-0325">Glycoprotein</keyword>
<keyword id="KW-1032">Host cell membrane</keyword>
<keyword id="KW-1040">Host Golgi apparatus</keyword>
<keyword id="KW-1043">Host membrane</keyword>
<keyword id="KW-0472">Membrane</keyword>
<keyword id="KW-1185">Reference proteome</keyword>
<keyword id="KW-0732">Signal</keyword>
<keyword id="KW-0261">Viral envelope protein</keyword>
<keyword id="KW-1162">Viral penetration into host cytoplasm</keyword>
<keyword id="KW-0946">Virion</keyword>
<keyword id="KW-1160">Virus entry into host cell</keyword>
<dbReference type="EMBL" id="DQ279927">
    <property type="protein sequence ID" value="ABB89252.1"/>
    <property type="molecule type" value="Genomic_DNA"/>
</dbReference>
<dbReference type="RefSeq" id="YP_001129472.1">
    <property type="nucleotide sequence ID" value="NC_009334.1"/>
</dbReference>
<dbReference type="PDB" id="6C5V">
    <property type="method" value="EM"/>
    <property type="resolution" value="4.80 A"/>
    <property type="chains" value="B=24-137"/>
</dbReference>
<dbReference type="PDBsum" id="6C5V"/>
<dbReference type="EMDB" id="EMD-7344"/>
<dbReference type="SMR" id="Q1HVF6"/>
<dbReference type="ABCD" id="Q1HVF6">
    <property type="antibodies" value="1 sequenced antibody"/>
</dbReference>
<dbReference type="KEGG" id="vg:5176156"/>
<dbReference type="Proteomes" id="UP000007639">
    <property type="component" value="Genome"/>
</dbReference>
<dbReference type="GO" id="GO:0044177">
    <property type="term" value="C:host cell Golgi apparatus"/>
    <property type="evidence" value="ECO:0007669"/>
    <property type="project" value="UniProtKB-SubCell"/>
</dbReference>
<dbReference type="GO" id="GO:0020002">
    <property type="term" value="C:host cell plasma membrane"/>
    <property type="evidence" value="ECO:0007669"/>
    <property type="project" value="UniProtKB-SubCell"/>
</dbReference>
<dbReference type="GO" id="GO:0016020">
    <property type="term" value="C:membrane"/>
    <property type="evidence" value="ECO:0007669"/>
    <property type="project" value="UniProtKB-KW"/>
</dbReference>
<dbReference type="GO" id="GO:0019031">
    <property type="term" value="C:viral envelope"/>
    <property type="evidence" value="ECO:0007669"/>
    <property type="project" value="UniProtKB-KW"/>
</dbReference>
<dbReference type="GO" id="GO:0055036">
    <property type="term" value="C:virion membrane"/>
    <property type="evidence" value="ECO:0007669"/>
    <property type="project" value="UniProtKB-SubCell"/>
</dbReference>
<dbReference type="GO" id="GO:0019064">
    <property type="term" value="P:fusion of virus membrane with host plasma membrane"/>
    <property type="evidence" value="ECO:0007669"/>
    <property type="project" value="UniProtKB-KW"/>
</dbReference>
<dbReference type="GO" id="GO:0046718">
    <property type="term" value="P:symbiont entry into host cell"/>
    <property type="evidence" value="ECO:0007669"/>
    <property type="project" value="UniProtKB-KW"/>
</dbReference>
<dbReference type="Gene3D" id="3.10.390.20">
    <property type="entry name" value="Viral glycoprotein L"/>
    <property type="match status" value="1"/>
</dbReference>
<dbReference type="HAMAP" id="MF_04034">
    <property type="entry name" value="HSV_GL_alphagamma"/>
    <property type="match status" value="1"/>
</dbReference>
<dbReference type="InterPro" id="IPR020175">
    <property type="entry name" value="Herpes_gL_rhadinovirus"/>
</dbReference>
<dbReference type="InterPro" id="IPR038313">
    <property type="entry name" value="Herpes_gL_rhadinovirus_sf"/>
</dbReference>
<dbReference type="InterPro" id="IPR034708">
    <property type="entry name" value="HSV_GL_alphagamma"/>
</dbReference>
<dbReference type="Pfam" id="PF11108">
    <property type="entry name" value="Phage_glycop_gL"/>
    <property type="match status" value="1"/>
</dbReference>
<gene>
    <name evidence="2" type="primary">gL</name>
    <name type="ORF">BKRF2</name>
</gene>
<feature type="signal peptide" evidence="2">
    <location>
        <begin position="1"/>
        <end position="25"/>
    </location>
</feature>
<feature type="chain" id="PRO_0000375947" description="Envelope glycoprotein L" evidence="2">
    <location>
        <begin position="26"/>
        <end position="137"/>
    </location>
</feature>
<feature type="region of interest" description="Interaction with gH" evidence="2">
    <location>
        <begin position="23"/>
        <end position="128"/>
    </location>
</feature>
<feature type="disulfide bond" evidence="1">
    <location>
        <begin position="28"/>
        <end position="56"/>
    </location>
</feature>
<feature type="disulfide bond" evidence="1">
    <location>
        <begin position="29"/>
        <end position="79"/>
    </location>
</feature>
<protein>
    <recommendedName>
        <fullName evidence="2">Envelope glycoprotein L</fullName>
        <shortName evidence="2">gL</shortName>
    </recommendedName>
</protein>
<organism>
    <name type="scientific">Epstein-Barr virus (strain AG876)</name>
    <name type="common">HHV-4</name>
    <name type="synonym">Human herpesvirus 4</name>
    <dbReference type="NCBI Taxonomy" id="82830"/>
    <lineage>
        <taxon>Viruses</taxon>
        <taxon>Duplodnaviria</taxon>
        <taxon>Heunggongvirae</taxon>
        <taxon>Peploviricota</taxon>
        <taxon>Herviviricetes</taxon>
        <taxon>Herpesvirales</taxon>
        <taxon>Orthoherpesviridae</taxon>
        <taxon>Gammaherpesvirinae</taxon>
        <taxon>Lymphocryptovirus</taxon>
        <taxon>Lymphocryptovirus humangamma4</taxon>
        <taxon>Epstein-Barr virus (strain GD1)</taxon>
    </lineage>
</organism>
<organismHost>
    <name type="scientific">Homo sapiens</name>
    <name type="common">Human</name>
    <dbReference type="NCBI Taxonomy" id="9606"/>
</organismHost>
<proteinExistence type="evidence at protein level"/>